<feature type="transit peptide" description="Mitochondrion" evidence="3">
    <location>
        <begin position="1"/>
        <end position="38"/>
    </location>
</feature>
<feature type="chain" id="PRO_0000045295" description="Cytochrome c peroxidase, mitochondrial">
    <location>
        <begin position="39"/>
        <end position="358"/>
    </location>
</feature>
<feature type="region of interest" description="Disordered" evidence="6">
    <location>
        <begin position="192"/>
        <end position="214"/>
    </location>
</feature>
<feature type="active site" description="Proton acceptor" evidence="4 5">
    <location>
        <position position="119"/>
    </location>
</feature>
<feature type="active site" description="Tryptophan radical intermediate" evidence="1">
    <location>
        <position position="258"/>
    </location>
</feature>
<feature type="binding site" description="axial binding residue">
    <location>
        <position position="242"/>
    </location>
    <ligand>
        <name>heme b</name>
        <dbReference type="ChEBI" id="CHEBI:60344"/>
    </ligand>
    <ligandPart>
        <name>Fe</name>
        <dbReference type="ChEBI" id="CHEBI:18248"/>
    </ligandPart>
</feature>
<feature type="site" description="Transition state stabilizer" evidence="4">
    <location>
        <position position="115"/>
    </location>
</feature>
<keyword id="KW-0349">Heme</keyword>
<keyword id="KW-0408">Iron</keyword>
<keyword id="KW-0479">Metal-binding</keyword>
<keyword id="KW-0496">Mitochondrion</keyword>
<keyword id="KW-0560">Oxidoreductase</keyword>
<keyword id="KW-0575">Peroxidase</keyword>
<keyword id="KW-1185">Reference proteome</keyword>
<keyword id="KW-0809">Transit peptide</keyword>
<dbReference type="EC" id="1.11.1.5" evidence="2"/>
<dbReference type="EMBL" id="CM002236">
    <property type="protein sequence ID" value="ESA44097.1"/>
    <property type="molecule type" value="Genomic_DNA"/>
</dbReference>
<dbReference type="EMBL" id="CM002236">
    <property type="protein sequence ID" value="ESA44098.1"/>
    <property type="molecule type" value="Genomic_DNA"/>
</dbReference>
<dbReference type="EMBL" id="CM002236">
    <property type="protein sequence ID" value="ESA44099.1"/>
    <property type="molecule type" value="Genomic_DNA"/>
</dbReference>
<dbReference type="RefSeq" id="XP_011393142.1">
    <property type="nucleotide sequence ID" value="XM_011394840.1"/>
</dbReference>
<dbReference type="RefSeq" id="XP_011393143.1">
    <property type="nucleotide sequence ID" value="XM_011394841.1"/>
</dbReference>
<dbReference type="RefSeq" id="XP_011393144.1">
    <property type="nucleotide sequence ID" value="XM_011394842.1"/>
</dbReference>
<dbReference type="SMR" id="Q7SDV9"/>
<dbReference type="FunCoup" id="Q7SDV9">
    <property type="interactions" value="71"/>
</dbReference>
<dbReference type="STRING" id="367110.Q7SDV9"/>
<dbReference type="PeroxiBase" id="1989">
    <property type="entry name" value="NcCcP"/>
</dbReference>
<dbReference type="PaxDb" id="5141-EFNCRP00000002864"/>
<dbReference type="EnsemblFungi" id="ESA44097">
    <property type="protein sequence ID" value="ESA44097"/>
    <property type="gene ID" value="NCU03297"/>
</dbReference>
<dbReference type="EnsemblFungi" id="ESA44098">
    <property type="protein sequence ID" value="ESA44098"/>
    <property type="gene ID" value="NCU03297"/>
</dbReference>
<dbReference type="EnsemblFungi" id="ESA44099">
    <property type="protein sequence ID" value="ESA44099"/>
    <property type="gene ID" value="NCU03297"/>
</dbReference>
<dbReference type="GeneID" id="3880372"/>
<dbReference type="KEGG" id="ncr:NCU03297"/>
<dbReference type="VEuPathDB" id="FungiDB:NCU03297"/>
<dbReference type="HOGENOM" id="CLU_036959_1_1_1"/>
<dbReference type="InParanoid" id="Q7SDV9"/>
<dbReference type="OMA" id="QRKWNGP"/>
<dbReference type="OrthoDB" id="2859658at2759"/>
<dbReference type="Proteomes" id="UP000001805">
    <property type="component" value="Chromosome 1, Linkage Group I"/>
</dbReference>
<dbReference type="GO" id="GO:0005758">
    <property type="term" value="C:mitochondrial intermembrane space"/>
    <property type="evidence" value="ECO:0007669"/>
    <property type="project" value="UniProtKB-SubCell"/>
</dbReference>
<dbReference type="GO" id="GO:0005759">
    <property type="term" value="C:mitochondrial matrix"/>
    <property type="evidence" value="ECO:0007669"/>
    <property type="project" value="UniProtKB-SubCell"/>
</dbReference>
<dbReference type="GO" id="GO:0004130">
    <property type="term" value="F:cytochrome-c peroxidase activity"/>
    <property type="evidence" value="ECO:0007669"/>
    <property type="project" value="UniProtKB-EC"/>
</dbReference>
<dbReference type="GO" id="GO:0020037">
    <property type="term" value="F:heme binding"/>
    <property type="evidence" value="ECO:0007669"/>
    <property type="project" value="InterPro"/>
</dbReference>
<dbReference type="GO" id="GO:0046872">
    <property type="term" value="F:metal ion binding"/>
    <property type="evidence" value="ECO:0007669"/>
    <property type="project" value="UniProtKB-KW"/>
</dbReference>
<dbReference type="GO" id="GO:0004601">
    <property type="term" value="F:peroxidase activity"/>
    <property type="evidence" value="ECO:0000318"/>
    <property type="project" value="GO_Central"/>
</dbReference>
<dbReference type="GO" id="GO:0034599">
    <property type="term" value="P:cellular response to oxidative stress"/>
    <property type="evidence" value="ECO:0000318"/>
    <property type="project" value="GO_Central"/>
</dbReference>
<dbReference type="GO" id="GO:0042744">
    <property type="term" value="P:hydrogen peroxide catabolic process"/>
    <property type="evidence" value="ECO:0000318"/>
    <property type="project" value="GO_Central"/>
</dbReference>
<dbReference type="GO" id="GO:0000302">
    <property type="term" value="P:response to reactive oxygen species"/>
    <property type="evidence" value="ECO:0000318"/>
    <property type="project" value="GO_Central"/>
</dbReference>
<dbReference type="CDD" id="cd00691">
    <property type="entry name" value="ascorbate_peroxidase"/>
    <property type="match status" value="1"/>
</dbReference>
<dbReference type="FunFam" id="1.10.420.10:FF:000009">
    <property type="entry name" value="Ascorbate peroxidase"/>
    <property type="match status" value="1"/>
</dbReference>
<dbReference type="FunFam" id="1.10.520.10:FF:000005">
    <property type="entry name" value="Cytochrome c peroxidase"/>
    <property type="match status" value="1"/>
</dbReference>
<dbReference type="Gene3D" id="1.10.520.10">
    <property type="match status" value="1"/>
</dbReference>
<dbReference type="Gene3D" id="1.10.420.10">
    <property type="entry name" value="Peroxidase, domain 2"/>
    <property type="match status" value="1"/>
</dbReference>
<dbReference type="InterPro" id="IPR044831">
    <property type="entry name" value="Ccp1-like"/>
</dbReference>
<dbReference type="InterPro" id="IPR002016">
    <property type="entry name" value="Haem_peroxidase"/>
</dbReference>
<dbReference type="InterPro" id="IPR010255">
    <property type="entry name" value="Haem_peroxidase_sf"/>
</dbReference>
<dbReference type="InterPro" id="IPR002207">
    <property type="entry name" value="Peroxidase_I"/>
</dbReference>
<dbReference type="InterPro" id="IPR019794">
    <property type="entry name" value="Peroxidases_AS"/>
</dbReference>
<dbReference type="InterPro" id="IPR019793">
    <property type="entry name" value="Peroxidases_heam-ligand_BS"/>
</dbReference>
<dbReference type="PANTHER" id="PTHR31356:SF58">
    <property type="entry name" value="CYTOCHROME C PEROXIDASE, MITOCHONDRIAL"/>
    <property type="match status" value="1"/>
</dbReference>
<dbReference type="PANTHER" id="PTHR31356">
    <property type="entry name" value="THYLAKOID LUMENAL 29 KDA PROTEIN, CHLOROPLASTIC-RELATED"/>
    <property type="match status" value="1"/>
</dbReference>
<dbReference type="Pfam" id="PF00141">
    <property type="entry name" value="peroxidase"/>
    <property type="match status" value="1"/>
</dbReference>
<dbReference type="PRINTS" id="PR00459">
    <property type="entry name" value="ASPEROXIDASE"/>
</dbReference>
<dbReference type="PRINTS" id="PR00458">
    <property type="entry name" value="PEROXIDASE"/>
</dbReference>
<dbReference type="SUPFAM" id="SSF48113">
    <property type="entry name" value="Heme-dependent peroxidases"/>
    <property type="match status" value="1"/>
</dbReference>
<dbReference type="PROSITE" id="PS00435">
    <property type="entry name" value="PEROXIDASE_1"/>
    <property type="match status" value="1"/>
</dbReference>
<dbReference type="PROSITE" id="PS00436">
    <property type="entry name" value="PEROXIDASE_2"/>
    <property type="match status" value="1"/>
</dbReference>
<dbReference type="PROSITE" id="PS50873">
    <property type="entry name" value="PEROXIDASE_4"/>
    <property type="match status" value="1"/>
</dbReference>
<gene>
    <name type="primary">ccp-1</name>
    <name type="ORF">NCU03297</name>
</gene>
<proteinExistence type="inferred from homology"/>
<sequence>MAASRTATRTLRALRTSTRPALTAAPRAAFRQGGRRLYSSEPAKSGGSNIWAWAIGAGALGAGGLWYLNQDGASATPKVFAPKFDDYQAVYNEIASRLEEKDDYDDGSYGPVLVRLAWHASGTYDKETGTGGSNGATMRFAPESDHGANAGLKAARDFLEPVKAKFPWITYSDLWILGGVCAIQEMLGPQIPYRPGRQDRDAAGCTPDGRLPDASQAQDHLRNIFYRMGFNDQEIVALSGAHALGRCHADRSGFDGPWTFSPTVLTNDYYKLLLDEKWQWKKWNGPKQYEDKKTKSLMMLPADMALIQDKKFKQWVEKYAADNELFFKDFSNVIVKLFELGVPFAENSERWVFKTVNA</sequence>
<organism>
    <name type="scientific">Neurospora crassa (strain ATCC 24698 / 74-OR23-1A / CBS 708.71 / DSM 1257 / FGSC 987)</name>
    <dbReference type="NCBI Taxonomy" id="367110"/>
    <lineage>
        <taxon>Eukaryota</taxon>
        <taxon>Fungi</taxon>
        <taxon>Dikarya</taxon>
        <taxon>Ascomycota</taxon>
        <taxon>Pezizomycotina</taxon>
        <taxon>Sordariomycetes</taxon>
        <taxon>Sordariomycetidae</taxon>
        <taxon>Sordariales</taxon>
        <taxon>Sordariaceae</taxon>
        <taxon>Neurospora</taxon>
    </lineage>
</organism>
<evidence type="ECO:0000250" key="1"/>
<evidence type="ECO:0000250" key="2">
    <source>
        <dbReference type="UniProtKB" id="P00431"/>
    </source>
</evidence>
<evidence type="ECO:0000255" key="3"/>
<evidence type="ECO:0000255" key="4">
    <source>
        <dbReference type="PROSITE-ProRule" id="PRU00297"/>
    </source>
</evidence>
<evidence type="ECO:0000255" key="5">
    <source>
        <dbReference type="PROSITE-ProRule" id="PRU10012"/>
    </source>
</evidence>
<evidence type="ECO:0000256" key="6">
    <source>
        <dbReference type="SAM" id="MobiDB-lite"/>
    </source>
</evidence>
<evidence type="ECO:0000305" key="7"/>
<accession>Q7SDV9</accession>
<accession>V5IPZ8</accession>
<protein>
    <recommendedName>
        <fullName>Cytochrome c peroxidase, mitochondrial</fullName>
        <shortName>CCP</shortName>
        <ecNumber evidence="2">1.11.1.5</ecNumber>
    </recommendedName>
</protein>
<name>CCPR_NEUCR</name>
<comment type="function">
    <text evidence="2">Destroys radicals which are normally produced within the cells and which are toxic to biological systems.</text>
</comment>
<comment type="catalytic activity">
    <reaction evidence="2">
        <text>2 Fe(II)-[cytochrome c] + H2O2 + 2 H(+) = 2 Fe(III)-[cytochrome c] + 2 H2O</text>
        <dbReference type="Rhea" id="RHEA:16581"/>
        <dbReference type="Rhea" id="RHEA-COMP:10350"/>
        <dbReference type="Rhea" id="RHEA-COMP:14399"/>
        <dbReference type="ChEBI" id="CHEBI:15377"/>
        <dbReference type="ChEBI" id="CHEBI:15378"/>
        <dbReference type="ChEBI" id="CHEBI:16240"/>
        <dbReference type="ChEBI" id="CHEBI:29033"/>
        <dbReference type="ChEBI" id="CHEBI:29034"/>
        <dbReference type="EC" id="1.11.1.5"/>
    </reaction>
</comment>
<comment type="cofactor">
    <cofactor evidence="4">
        <name>heme b</name>
        <dbReference type="ChEBI" id="CHEBI:60344"/>
    </cofactor>
    <text evidence="4">Binds 1 heme b (iron(II)-protoporphyrin IX) group per subunit.</text>
</comment>
<comment type="subunit">
    <text evidence="2">Forms a one-to-one complex with cytochrome c.</text>
</comment>
<comment type="subcellular location">
    <subcellularLocation>
        <location evidence="2">Mitochondrion matrix</location>
    </subcellularLocation>
    <subcellularLocation>
        <location evidence="2">Mitochondrion intermembrane space</location>
    </subcellularLocation>
</comment>
<comment type="similarity">
    <text evidence="7">Belongs to the peroxidase family. Cytochrome c peroxidase subfamily.</text>
</comment>
<reference key="1">
    <citation type="journal article" date="2003" name="Nature">
        <title>The genome sequence of the filamentous fungus Neurospora crassa.</title>
        <authorList>
            <person name="Galagan J.E."/>
            <person name="Calvo S.E."/>
            <person name="Borkovich K.A."/>
            <person name="Selker E.U."/>
            <person name="Read N.D."/>
            <person name="Jaffe D.B."/>
            <person name="FitzHugh W."/>
            <person name="Ma L.-J."/>
            <person name="Smirnov S."/>
            <person name="Purcell S."/>
            <person name="Rehman B."/>
            <person name="Elkins T."/>
            <person name="Engels R."/>
            <person name="Wang S."/>
            <person name="Nielsen C.B."/>
            <person name="Butler J."/>
            <person name="Endrizzi M."/>
            <person name="Qui D."/>
            <person name="Ianakiev P."/>
            <person name="Bell-Pedersen D."/>
            <person name="Nelson M.A."/>
            <person name="Werner-Washburne M."/>
            <person name="Selitrennikoff C.P."/>
            <person name="Kinsey J.A."/>
            <person name="Braun E.L."/>
            <person name="Zelter A."/>
            <person name="Schulte U."/>
            <person name="Kothe G.O."/>
            <person name="Jedd G."/>
            <person name="Mewes H.-W."/>
            <person name="Staben C."/>
            <person name="Marcotte E."/>
            <person name="Greenberg D."/>
            <person name="Roy A."/>
            <person name="Foley K."/>
            <person name="Naylor J."/>
            <person name="Stange-Thomann N."/>
            <person name="Barrett R."/>
            <person name="Gnerre S."/>
            <person name="Kamal M."/>
            <person name="Kamvysselis M."/>
            <person name="Mauceli E.W."/>
            <person name="Bielke C."/>
            <person name="Rudd S."/>
            <person name="Frishman D."/>
            <person name="Krystofova S."/>
            <person name="Rasmussen C."/>
            <person name="Metzenberg R.L."/>
            <person name="Perkins D.D."/>
            <person name="Kroken S."/>
            <person name="Cogoni C."/>
            <person name="Macino G."/>
            <person name="Catcheside D.E.A."/>
            <person name="Li W."/>
            <person name="Pratt R.J."/>
            <person name="Osmani S.A."/>
            <person name="DeSouza C.P.C."/>
            <person name="Glass N.L."/>
            <person name="Orbach M.J."/>
            <person name="Berglund J.A."/>
            <person name="Voelker R."/>
            <person name="Yarden O."/>
            <person name="Plamann M."/>
            <person name="Seiler S."/>
            <person name="Dunlap J.C."/>
            <person name="Radford A."/>
            <person name="Aramayo R."/>
            <person name="Natvig D.O."/>
            <person name="Alex L.A."/>
            <person name="Mannhaupt G."/>
            <person name="Ebbole D.J."/>
            <person name="Freitag M."/>
            <person name="Paulsen I."/>
            <person name="Sachs M.S."/>
            <person name="Lander E.S."/>
            <person name="Nusbaum C."/>
            <person name="Birren B.W."/>
        </authorList>
    </citation>
    <scope>NUCLEOTIDE SEQUENCE [LARGE SCALE GENOMIC DNA]</scope>
    <source>
        <strain>ATCC 24698 / 74-OR23-1A / CBS 708.71 / DSM 1257 / FGSC 987</strain>
    </source>
</reference>